<reference key="1">
    <citation type="journal article" date="2008" name="DNA Res.">
        <title>Transcriptome analysis of a cDNA library from adult human epididymis.</title>
        <authorList>
            <person name="Li J.Y."/>
            <person name="Wang H.Y."/>
            <person name="Liu J."/>
            <person name="Liu Q."/>
            <person name="Zhang J.S."/>
            <person name="Wan F.C."/>
            <person name="Liu F.J."/>
            <person name="Jin S.H."/>
            <person name="Zhang Y.L."/>
        </authorList>
    </citation>
    <scope>NUCLEOTIDE SEQUENCE [LARGE SCALE MRNA]</scope>
    <scope>TISSUE SPECIFICITY</scope>
    <source>
        <tissue>Epididymis</tissue>
    </source>
</reference>
<reference key="2">
    <citation type="journal article" date="2003" name="Nature">
        <title>The DNA sequence and analysis of human chromosome 6.</title>
        <authorList>
            <person name="Mungall A.J."/>
            <person name="Palmer S.A."/>
            <person name="Sims S.K."/>
            <person name="Edwards C.A."/>
            <person name="Ashurst J.L."/>
            <person name="Wilming L."/>
            <person name="Jones M.C."/>
            <person name="Horton R."/>
            <person name="Hunt S.E."/>
            <person name="Scott C.E."/>
            <person name="Gilbert J.G.R."/>
            <person name="Clamp M.E."/>
            <person name="Bethel G."/>
            <person name="Milne S."/>
            <person name="Ainscough R."/>
            <person name="Almeida J.P."/>
            <person name="Ambrose K.D."/>
            <person name="Andrews T.D."/>
            <person name="Ashwell R.I.S."/>
            <person name="Babbage A.K."/>
            <person name="Bagguley C.L."/>
            <person name="Bailey J."/>
            <person name="Banerjee R."/>
            <person name="Barker D.J."/>
            <person name="Barlow K.F."/>
            <person name="Bates K."/>
            <person name="Beare D.M."/>
            <person name="Beasley H."/>
            <person name="Beasley O."/>
            <person name="Bird C.P."/>
            <person name="Blakey S.E."/>
            <person name="Bray-Allen S."/>
            <person name="Brook J."/>
            <person name="Brown A.J."/>
            <person name="Brown J.Y."/>
            <person name="Burford D.C."/>
            <person name="Burrill W."/>
            <person name="Burton J."/>
            <person name="Carder C."/>
            <person name="Carter N.P."/>
            <person name="Chapman J.C."/>
            <person name="Clark S.Y."/>
            <person name="Clark G."/>
            <person name="Clee C.M."/>
            <person name="Clegg S."/>
            <person name="Cobley V."/>
            <person name="Collier R.E."/>
            <person name="Collins J.E."/>
            <person name="Colman L.K."/>
            <person name="Corby N.R."/>
            <person name="Coville G.J."/>
            <person name="Culley K.M."/>
            <person name="Dhami P."/>
            <person name="Davies J."/>
            <person name="Dunn M."/>
            <person name="Earthrowl M.E."/>
            <person name="Ellington A.E."/>
            <person name="Evans K.A."/>
            <person name="Faulkner L."/>
            <person name="Francis M.D."/>
            <person name="Frankish A."/>
            <person name="Frankland J."/>
            <person name="French L."/>
            <person name="Garner P."/>
            <person name="Garnett J."/>
            <person name="Ghori M.J."/>
            <person name="Gilby L.M."/>
            <person name="Gillson C.J."/>
            <person name="Glithero R.J."/>
            <person name="Grafham D.V."/>
            <person name="Grant M."/>
            <person name="Gribble S."/>
            <person name="Griffiths C."/>
            <person name="Griffiths M.N.D."/>
            <person name="Hall R."/>
            <person name="Halls K.S."/>
            <person name="Hammond S."/>
            <person name="Harley J.L."/>
            <person name="Hart E.A."/>
            <person name="Heath P.D."/>
            <person name="Heathcott R."/>
            <person name="Holmes S.J."/>
            <person name="Howden P.J."/>
            <person name="Howe K.L."/>
            <person name="Howell G.R."/>
            <person name="Huckle E."/>
            <person name="Humphray S.J."/>
            <person name="Humphries M.D."/>
            <person name="Hunt A.R."/>
            <person name="Johnson C.M."/>
            <person name="Joy A.A."/>
            <person name="Kay M."/>
            <person name="Keenan S.J."/>
            <person name="Kimberley A.M."/>
            <person name="King A."/>
            <person name="Laird G.K."/>
            <person name="Langford C."/>
            <person name="Lawlor S."/>
            <person name="Leongamornlert D.A."/>
            <person name="Leversha M."/>
            <person name="Lloyd C.R."/>
            <person name="Lloyd D.M."/>
            <person name="Loveland J.E."/>
            <person name="Lovell J."/>
            <person name="Martin S."/>
            <person name="Mashreghi-Mohammadi M."/>
            <person name="Maslen G.L."/>
            <person name="Matthews L."/>
            <person name="McCann O.T."/>
            <person name="McLaren S.J."/>
            <person name="McLay K."/>
            <person name="McMurray A."/>
            <person name="Moore M.J.F."/>
            <person name="Mullikin J.C."/>
            <person name="Niblett D."/>
            <person name="Nickerson T."/>
            <person name="Novik K.L."/>
            <person name="Oliver K."/>
            <person name="Overton-Larty E.K."/>
            <person name="Parker A."/>
            <person name="Patel R."/>
            <person name="Pearce A.V."/>
            <person name="Peck A.I."/>
            <person name="Phillimore B.J.C.T."/>
            <person name="Phillips S."/>
            <person name="Plumb R.W."/>
            <person name="Porter K.M."/>
            <person name="Ramsey Y."/>
            <person name="Ranby S.A."/>
            <person name="Rice C.M."/>
            <person name="Ross M.T."/>
            <person name="Searle S.M."/>
            <person name="Sehra H.K."/>
            <person name="Sheridan E."/>
            <person name="Skuce C.D."/>
            <person name="Smith S."/>
            <person name="Smith M."/>
            <person name="Spraggon L."/>
            <person name="Squares S.L."/>
            <person name="Steward C.A."/>
            <person name="Sycamore N."/>
            <person name="Tamlyn-Hall G."/>
            <person name="Tester J."/>
            <person name="Theaker A.J."/>
            <person name="Thomas D.W."/>
            <person name="Thorpe A."/>
            <person name="Tracey A."/>
            <person name="Tromans A."/>
            <person name="Tubby B."/>
            <person name="Wall M."/>
            <person name="Wallis J.M."/>
            <person name="West A.P."/>
            <person name="White S.S."/>
            <person name="Whitehead S.L."/>
            <person name="Whittaker H."/>
            <person name="Wild A."/>
            <person name="Willey D.J."/>
            <person name="Wilmer T.E."/>
            <person name="Wood J.M."/>
            <person name="Wray P.W."/>
            <person name="Wyatt J.C."/>
            <person name="Young L."/>
            <person name="Younger R.M."/>
            <person name="Bentley D.R."/>
            <person name="Coulson A."/>
            <person name="Durbin R.M."/>
            <person name="Hubbard T."/>
            <person name="Sulston J.E."/>
            <person name="Dunham I."/>
            <person name="Rogers J."/>
            <person name="Beck S."/>
        </authorList>
    </citation>
    <scope>NUCLEOTIDE SEQUENCE [LARGE SCALE GENOMIC DNA]</scope>
</reference>
<reference key="3">
    <citation type="submission" date="2005-07" db="EMBL/GenBank/DDBJ databases">
        <authorList>
            <person name="Mural R.J."/>
            <person name="Istrail S."/>
            <person name="Sutton G.G."/>
            <person name="Florea L."/>
            <person name="Halpern A.L."/>
            <person name="Mobarry C.M."/>
            <person name="Lippert R."/>
            <person name="Walenz B."/>
            <person name="Shatkay H."/>
            <person name="Dew I."/>
            <person name="Miller J.R."/>
            <person name="Flanigan M.J."/>
            <person name="Edwards N.J."/>
            <person name="Bolanos R."/>
            <person name="Fasulo D."/>
            <person name="Halldorsson B.V."/>
            <person name="Hannenhalli S."/>
            <person name="Turner R."/>
            <person name="Yooseph S."/>
            <person name="Lu F."/>
            <person name="Nusskern D.R."/>
            <person name="Shue B.C."/>
            <person name="Zheng X.H."/>
            <person name="Zhong F."/>
            <person name="Delcher A.L."/>
            <person name="Huson D.H."/>
            <person name="Kravitz S.A."/>
            <person name="Mouchard L."/>
            <person name="Reinert K."/>
            <person name="Remington K.A."/>
            <person name="Clark A.G."/>
            <person name="Waterman M.S."/>
            <person name="Eichler E.E."/>
            <person name="Adams M.D."/>
            <person name="Hunkapiller M.W."/>
            <person name="Myers E.W."/>
            <person name="Venter J.C."/>
        </authorList>
    </citation>
    <scope>NUCLEOTIDE SEQUENCE [LARGE SCALE GENOMIC DNA]</scope>
</reference>
<reference key="4">
    <citation type="journal article" date="2004" name="Genome Res.">
        <title>The status, quality, and expansion of the NIH full-length cDNA project: the Mammalian Gene Collection (MGC).</title>
        <authorList>
            <consortium name="The MGC Project Team"/>
        </authorList>
    </citation>
    <scope>NUCLEOTIDE SEQUENCE [LARGE SCALE MRNA]</scope>
</reference>
<protein>
    <recommendedName>
        <fullName>Colipase-like protein 1</fullName>
    </recommendedName>
</protein>
<comment type="subcellular location">
    <subcellularLocation>
        <location evidence="2">Secreted</location>
    </subcellularLocation>
</comment>
<comment type="tissue specificity">
    <text evidence="3">Exclusively expressed in epididymis, in the corpus region.</text>
</comment>
<comment type="similarity">
    <text evidence="2">Belongs to the colipase family.</text>
</comment>
<comment type="sequence caution" evidence="4">
    <conflict type="frameshift">
        <sequence resource="EMBL-CDS" id="ABK41022"/>
    </conflict>
</comment>
<accession>A2RUU4</accession>
<accession>A7E2T6</accession>
<accession>B2RPE2</accession>
<accession>B5G4V2</accession>
<accession>B6ZDM9</accession>
<accession>Q5T9G1</accession>
<evidence type="ECO:0000255" key="1"/>
<evidence type="ECO:0000255" key="2">
    <source>
        <dbReference type="PROSITE-ProRule" id="PRU00674"/>
    </source>
</evidence>
<evidence type="ECO:0000269" key="3">
    <source>
    </source>
</evidence>
<evidence type="ECO:0000305" key="4"/>
<proteinExistence type="evidence at transcript level"/>
<organism>
    <name type="scientific">Homo sapiens</name>
    <name type="common">Human</name>
    <dbReference type="NCBI Taxonomy" id="9606"/>
    <lineage>
        <taxon>Eukaryota</taxon>
        <taxon>Metazoa</taxon>
        <taxon>Chordata</taxon>
        <taxon>Craniata</taxon>
        <taxon>Vertebrata</taxon>
        <taxon>Euteleostomi</taxon>
        <taxon>Mammalia</taxon>
        <taxon>Eutheria</taxon>
        <taxon>Euarchontoglires</taxon>
        <taxon>Primates</taxon>
        <taxon>Haplorrhini</taxon>
        <taxon>Catarrhini</taxon>
        <taxon>Hominidae</taxon>
        <taxon>Homo</taxon>
    </lineage>
</organism>
<gene>
    <name type="primary">CLPSL1</name>
    <name type="synonym">C6orf127</name>
</gene>
<name>COLL1_HUMAN</name>
<dbReference type="EMBL" id="DQ823638">
    <property type="protein sequence ID" value="ABK41022.1"/>
    <property type="status" value="ALT_FRAME"/>
    <property type="molecule type" value="mRNA"/>
</dbReference>
<dbReference type="EMBL" id="AL157823">
    <property type="status" value="NOT_ANNOTATED_CDS"/>
    <property type="molecule type" value="Genomic_DNA"/>
</dbReference>
<dbReference type="EMBL" id="CH471081">
    <property type="protein sequence ID" value="EAX03849.1"/>
    <property type="molecule type" value="Genomic_DNA"/>
</dbReference>
<dbReference type="EMBL" id="BC133046">
    <property type="protein sequence ID" value="AAI33047.1"/>
    <property type="molecule type" value="mRNA"/>
</dbReference>
<dbReference type="EMBL" id="BC137392">
    <property type="protein sequence ID" value="AAI37393.1"/>
    <property type="molecule type" value="mRNA"/>
</dbReference>
<dbReference type="EMBL" id="BC150543">
    <property type="protein sequence ID" value="AAI50544.1"/>
    <property type="molecule type" value="mRNA"/>
</dbReference>
<dbReference type="EMBL" id="BC150544">
    <property type="protein sequence ID" value="AAI50545.1"/>
    <property type="molecule type" value="mRNA"/>
</dbReference>
<dbReference type="CCDS" id="CCDS43456.1"/>
<dbReference type="RefSeq" id="NP_001010886.1">
    <property type="nucleotide sequence ID" value="NM_001010886.5"/>
</dbReference>
<dbReference type="SMR" id="A2RUU4"/>
<dbReference type="BioGRID" id="131012">
    <property type="interactions" value="46"/>
</dbReference>
<dbReference type="FunCoup" id="A2RUU4">
    <property type="interactions" value="5"/>
</dbReference>
<dbReference type="IntAct" id="A2RUU4">
    <property type="interactions" value="7"/>
</dbReference>
<dbReference type="STRING" id="9606.ENSP00000362968"/>
<dbReference type="iPTMnet" id="A2RUU4"/>
<dbReference type="PhosphoSitePlus" id="A2RUU4"/>
<dbReference type="BioMuta" id="CLPSL1"/>
<dbReference type="MassIVE" id="A2RUU4"/>
<dbReference type="PaxDb" id="9606-ENSP00000362968"/>
<dbReference type="PeptideAtlas" id="A2RUU4"/>
<dbReference type="ProteomicsDB" id="525"/>
<dbReference type="Antibodypedia" id="55276">
    <property type="antibodies" value="5 antibodies from 5 providers"/>
</dbReference>
<dbReference type="DNASU" id="340204"/>
<dbReference type="Ensembl" id="ENST00000373861.6">
    <property type="protein sequence ID" value="ENSP00000362968.5"/>
    <property type="gene ID" value="ENSG00000204140.10"/>
</dbReference>
<dbReference type="GeneID" id="340204"/>
<dbReference type="KEGG" id="hsa:340204"/>
<dbReference type="MANE-Select" id="ENST00000373861.6">
    <property type="protein sequence ID" value="ENSP00000362968.5"/>
    <property type="RefSeq nucleotide sequence ID" value="NM_001010886.5"/>
    <property type="RefSeq protein sequence ID" value="NP_001010886.1"/>
</dbReference>
<dbReference type="UCSC" id="uc003old.5">
    <property type="organism name" value="human"/>
</dbReference>
<dbReference type="AGR" id="HGNC:21251"/>
<dbReference type="CTD" id="340204"/>
<dbReference type="DisGeNET" id="340204"/>
<dbReference type="GeneCards" id="CLPSL1"/>
<dbReference type="HGNC" id="HGNC:21251">
    <property type="gene designation" value="CLPSL1"/>
</dbReference>
<dbReference type="HPA" id="ENSG00000204140">
    <property type="expression patterns" value="Group enriched (epididymis, pancreas)"/>
</dbReference>
<dbReference type="neXtProt" id="NX_A2RUU4"/>
<dbReference type="OpenTargets" id="ENSG00000204140"/>
<dbReference type="PharmGKB" id="PA134984810"/>
<dbReference type="VEuPathDB" id="HostDB:ENSG00000204140"/>
<dbReference type="eggNOG" id="ENOG502TDXY">
    <property type="taxonomic scope" value="Eukaryota"/>
</dbReference>
<dbReference type="GeneTree" id="ENSGT00510000049845"/>
<dbReference type="HOGENOM" id="CLU_2037257_0_0_1"/>
<dbReference type="InParanoid" id="A2RUU4"/>
<dbReference type="OMA" id="WKSEKWS"/>
<dbReference type="OrthoDB" id="9527737at2759"/>
<dbReference type="PAN-GO" id="A2RUU4">
    <property type="GO annotations" value="1 GO annotation based on evolutionary models"/>
</dbReference>
<dbReference type="PhylomeDB" id="A2RUU4"/>
<dbReference type="TreeFam" id="TF336178"/>
<dbReference type="PathwayCommons" id="A2RUU4"/>
<dbReference type="SignaLink" id="A2RUU4"/>
<dbReference type="BioGRID-ORCS" id="340204">
    <property type="hits" value="13 hits in 1137 CRISPR screens"/>
</dbReference>
<dbReference type="GenomeRNAi" id="340204"/>
<dbReference type="Pharos" id="A2RUU4">
    <property type="development level" value="Tdark"/>
</dbReference>
<dbReference type="PRO" id="PR:A2RUU4"/>
<dbReference type="Proteomes" id="UP000005640">
    <property type="component" value="Chromosome 6"/>
</dbReference>
<dbReference type="RNAct" id="A2RUU4">
    <property type="molecule type" value="protein"/>
</dbReference>
<dbReference type="Bgee" id="ENSG00000204140">
    <property type="expression patterns" value="Expressed in body of pancreas and 69 other cell types or tissues"/>
</dbReference>
<dbReference type="ExpressionAtlas" id="A2RUU4">
    <property type="expression patterns" value="baseline and differential"/>
</dbReference>
<dbReference type="GO" id="GO:0005576">
    <property type="term" value="C:extracellular region"/>
    <property type="evidence" value="ECO:0007669"/>
    <property type="project" value="UniProtKB-SubCell"/>
</dbReference>
<dbReference type="GO" id="GO:0008047">
    <property type="term" value="F:enzyme activator activity"/>
    <property type="evidence" value="ECO:0007669"/>
    <property type="project" value="InterPro"/>
</dbReference>
<dbReference type="GO" id="GO:0007586">
    <property type="term" value="P:digestion"/>
    <property type="evidence" value="ECO:0007669"/>
    <property type="project" value="InterPro"/>
</dbReference>
<dbReference type="GO" id="GO:0016042">
    <property type="term" value="P:lipid catabolic process"/>
    <property type="evidence" value="ECO:0007669"/>
    <property type="project" value="InterPro"/>
</dbReference>
<dbReference type="GO" id="GO:0032094">
    <property type="term" value="P:response to food"/>
    <property type="evidence" value="ECO:0000318"/>
    <property type="project" value="GO_Central"/>
</dbReference>
<dbReference type="FunFam" id="2.10.80.10:FF:000009">
    <property type="entry name" value="Colipase like 1"/>
    <property type="match status" value="1"/>
</dbReference>
<dbReference type="Gene3D" id="2.10.80.10">
    <property type="entry name" value="Lipase, subunit A"/>
    <property type="match status" value="1"/>
</dbReference>
<dbReference type="InterPro" id="IPR001981">
    <property type="entry name" value="Colipase"/>
</dbReference>
<dbReference type="PANTHER" id="PTHR10041">
    <property type="entry name" value="COLIPASE"/>
    <property type="match status" value="1"/>
</dbReference>
<dbReference type="PANTHER" id="PTHR10041:SF7">
    <property type="entry name" value="COLIPASE-LIKE PROTEIN 1"/>
    <property type="match status" value="1"/>
</dbReference>
<dbReference type="PRINTS" id="PR00128">
    <property type="entry name" value="COLIPASE"/>
</dbReference>
<dbReference type="SMART" id="SM00023">
    <property type="entry name" value="COLIPASE"/>
    <property type="match status" value="1"/>
</dbReference>
<dbReference type="PROSITE" id="PS51342">
    <property type="entry name" value="COLIPASE_2"/>
    <property type="match status" value="1"/>
</dbReference>
<keyword id="KW-1015">Disulfide bond</keyword>
<keyword id="KW-1185">Reference proteome</keyword>
<keyword id="KW-0964">Secreted</keyword>
<keyword id="KW-0732">Signal</keyword>
<feature type="signal peptide" evidence="1">
    <location>
        <begin position="1"/>
        <end position="23"/>
    </location>
</feature>
<feature type="chain" id="PRO_0000337013" description="Colipase-like protein 1">
    <location>
        <begin position="24"/>
        <end position="121"/>
    </location>
</feature>
<feature type="disulfide bond" evidence="2">
    <location>
        <begin position="39"/>
        <end position="50"/>
    </location>
</feature>
<feature type="disulfide bond" evidence="2">
    <location>
        <begin position="45"/>
        <end position="61"/>
    </location>
</feature>
<feature type="disulfide bond" evidence="2">
    <location>
        <begin position="49"/>
        <end position="83"/>
    </location>
</feature>
<feature type="disulfide bond" evidence="2">
    <location>
        <begin position="71"/>
        <end position="91"/>
    </location>
</feature>
<feature type="disulfide bond" evidence="2">
    <location>
        <begin position="85"/>
        <end position="107"/>
    </location>
</feature>
<feature type="sequence variant" id="VAR_043560" description="In dbSNP:rs34109614.">
    <original>F</original>
    <variation>S</variation>
    <location>
        <position position="15"/>
    </location>
</feature>
<feature type="sequence conflict" description="In Ref. 4; AAI50545." evidence="4" ref="4">
    <original>I</original>
    <variation>M</variation>
    <location>
        <position position="92"/>
    </location>
</feature>
<sequence>MMLPQWLLLLFLLFFFLFLLTRGSLSPTKYNLLELKESCIRNQDCETGCCQRAPDNCESHCAEKGSEGSLCQTQVFFGQYRACPCLRNLTCIYSKNEKWLSIAYGRCQKIGRQKLAKKMFF</sequence>